<evidence type="ECO:0000255" key="1">
    <source>
        <dbReference type="HAMAP-Rule" id="MF_01247"/>
    </source>
</evidence>
<comment type="function">
    <text evidence="1">Positively regulates the transcription of the maltose regulon whose gene products are responsible for uptake and catabolism of malto-oligosaccharides. Specifically binds to the promoter region of its target genes, recognizing a short DNA motif called the MalT box.</text>
</comment>
<comment type="activity regulation">
    <text evidence="1">Activated by ATP and maltotriose, which are both required for DNA binding.</text>
</comment>
<comment type="subunit">
    <text evidence="1">Monomer in solution. Oligomerizes to an active state in the presence of the positive effectors ATP and maltotriose.</text>
</comment>
<comment type="similarity">
    <text evidence="1">Belongs to the MalT family.</text>
</comment>
<feature type="chain" id="PRO_1000165052" description="HTH-type transcriptional regulator MalT">
    <location>
        <begin position="1"/>
        <end position="901"/>
    </location>
</feature>
<feature type="domain" description="HTH luxR-type" evidence="1">
    <location>
        <begin position="829"/>
        <end position="894"/>
    </location>
</feature>
<feature type="DNA-binding region" description="H-T-H motif" evidence="1">
    <location>
        <begin position="853"/>
        <end position="872"/>
    </location>
</feature>
<feature type="binding site" evidence="1">
    <location>
        <begin position="39"/>
        <end position="46"/>
    </location>
    <ligand>
        <name>ATP</name>
        <dbReference type="ChEBI" id="CHEBI:30616"/>
    </ligand>
</feature>
<protein>
    <recommendedName>
        <fullName evidence="1">HTH-type transcriptional regulator MalT</fullName>
    </recommendedName>
    <alternativeName>
        <fullName evidence="1">ATP-dependent transcriptional activator MalT</fullName>
    </alternativeName>
</protein>
<organism>
    <name type="scientific">Escherichia coli (strain 55989 / EAEC)</name>
    <dbReference type="NCBI Taxonomy" id="585055"/>
    <lineage>
        <taxon>Bacteria</taxon>
        <taxon>Pseudomonadati</taxon>
        <taxon>Pseudomonadota</taxon>
        <taxon>Gammaproteobacteria</taxon>
        <taxon>Enterobacterales</taxon>
        <taxon>Enterobacteriaceae</taxon>
        <taxon>Escherichia</taxon>
    </lineage>
</organism>
<reference key="1">
    <citation type="journal article" date="2009" name="PLoS Genet.">
        <title>Organised genome dynamics in the Escherichia coli species results in highly diverse adaptive paths.</title>
        <authorList>
            <person name="Touchon M."/>
            <person name="Hoede C."/>
            <person name="Tenaillon O."/>
            <person name="Barbe V."/>
            <person name="Baeriswyl S."/>
            <person name="Bidet P."/>
            <person name="Bingen E."/>
            <person name="Bonacorsi S."/>
            <person name="Bouchier C."/>
            <person name="Bouvet O."/>
            <person name="Calteau A."/>
            <person name="Chiapello H."/>
            <person name="Clermont O."/>
            <person name="Cruveiller S."/>
            <person name="Danchin A."/>
            <person name="Diard M."/>
            <person name="Dossat C."/>
            <person name="Karoui M.E."/>
            <person name="Frapy E."/>
            <person name="Garry L."/>
            <person name="Ghigo J.M."/>
            <person name="Gilles A.M."/>
            <person name="Johnson J."/>
            <person name="Le Bouguenec C."/>
            <person name="Lescat M."/>
            <person name="Mangenot S."/>
            <person name="Martinez-Jehanne V."/>
            <person name="Matic I."/>
            <person name="Nassif X."/>
            <person name="Oztas S."/>
            <person name="Petit M.A."/>
            <person name="Pichon C."/>
            <person name="Rouy Z."/>
            <person name="Ruf C.S."/>
            <person name="Schneider D."/>
            <person name="Tourret J."/>
            <person name="Vacherie B."/>
            <person name="Vallenet D."/>
            <person name="Medigue C."/>
            <person name="Rocha E.P.C."/>
            <person name="Denamur E."/>
        </authorList>
    </citation>
    <scope>NUCLEOTIDE SEQUENCE [LARGE SCALE GENOMIC DNA]</scope>
    <source>
        <strain>55989 / EAEC</strain>
    </source>
</reference>
<sequence>MLIPSKLSRPVRLDHTVVRERLLAKLSGANNFRLALITSPAGYGKTTLISQWAAGKNDIGWYSLDEGDNQQERFASYLIAAVQQATNGHCAICETMAQKRQYASLTSLFAQLFIELAEWHSPLYLVIDDYHLITNPVIHESMRFFIRHQPENLTLVVLSRNLPQLGIANLRVRDQLLEIGSQQLAFTHQEAKQFFDCRLSSPIEAAESSRICDDVSGWATALQLIALSARQNTHSAHKSARRLAGINASHLSDYLVDEVLDNVDLATRHFLLKSAILRSMNDALITRVTGEENGQMRLEEIERQGLFLQRMDDTGEWFCYHPLFGNFLRQRCQWELAAELPEIHRAAAESWMAQGFPSEAIHHALAAGDALMLRDILLNHAWSLFNHSELSLLEESLKALPWDSLLENPQLVLLQAWLMQSQHRYGEVNTLLARAEHEIKDIREGTMHAEFNALRAQVAINDGNPDEAERLAKLALEELPPGWFYSRIVATSVLGEVLHCKGELTRSLALMQQTEQMARQHDVWHYALWSLIQQSEILFAQGFLQTAWETQEKAFQLINEQHLEQLPMHEFLVRIRAQLLWAWARLDEAEASARSGIEVLSSYQPQQQLQCLAMLIQCSLARGDLDNARSQLNRLENLLGNGKYHSDWISNANKVRVIYWQMTGDKAAAANWLRHTAKPEFANNHFLQGQWRNIARAQILLGEFEPAEIVLEELNENARSLRLMSDLNRNLLLLNQLYWQAGRKSDAQRVLLDALKLANRTGFISHFVIEGEAMAQQLRQLIQLNTLPELEQHRAQRILREINQHHRHKFAHFDENFVERLLNHPEVPELIRTSPLTQREWQVLGLIYSGYSNEQIAGELEVAATTIKTHIRNLYQKLGVAHRQAAVQHAQKLLKMMGYGV</sequence>
<gene>
    <name evidence="1" type="primary">malT</name>
    <name type="ordered locus">EC55989_3826</name>
</gene>
<name>MALT_ECO55</name>
<dbReference type="EMBL" id="CU928145">
    <property type="protein sequence ID" value="CAV00192.1"/>
    <property type="molecule type" value="Genomic_DNA"/>
</dbReference>
<dbReference type="RefSeq" id="WP_000906970.1">
    <property type="nucleotide sequence ID" value="NC_011748.1"/>
</dbReference>
<dbReference type="SMR" id="B7L4U8"/>
<dbReference type="GeneID" id="75202261"/>
<dbReference type="KEGG" id="eck:EC55989_3826"/>
<dbReference type="HOGENOM" id="CLU_006325_3_0_6"/>
<dbReference type="Proteomes" id="UP000000746">
    <property type="component" value="Chromosome"/>
</dbReference>
<dbReference type="GO" id="GO:0005524">
    <property type="term" value="F:ATP binding"/>
    <property type="evidence" value="ECO:0007669"/>
    <property type="project" value="UniProtKB-UniRule"/>
</dbReference>
<dbReference type="GO" id="GO:0003677">
    <property type="term" value="F:DNA binding"/>
    <property type="evidence" value="ECO:0007669"/>
    <property type="project" value="UniProtKB-KW"/>
</dbReference>
<dbReference type="GO" id="GO:0003700">
    <property type="term" value="F:DNA-binding transcription factor activity"/>
    <property type="evidence" value="ECO:0007669"/>
    <property type="project" value="UniProtKB-UniRule"/>
</dbReference>
<dbReference type="GO" id="GO:0045913">
    <property type="term" value="P:positive regulation of carbohydrate metabolic process"/>
    <property type="evidence" value="ECO:0007669"/>
    <property type="project" value="UniProtKB-UniRule"/>
</dbReference>
<dbReference type="GO" id="GO:0045893">
    <property type="term" value="P:positive regulation of DNA-templated transcription"/>
    <property type="evidence" value="ECO:0007669"/>
    <property type="project" value="UniProtKB-UniRule"/>
</dbReference>
<dbReference type="CDD" id="cd06170">
    <property type="entry name" value="LuxR_C_like"/>
    <property type="match status" value="1"/>
</dbReference>
<dbReference type="FunFam" id="1.10.10.10:FF:000115">
    <property type="entry name" value="HTH-type transcriptional regulator MalT"/>
    <property type="match status" value="1"/>
</dbReference>
<dbReference type="FunFam" id="1.25.40.10:FF:000086">
    <property type="entry name" value="HTH-type transcriptional regulator MalT"/>
    <property type="match status" value="1"/>
</dbReference>
<dbReference type="Gene3D" id="3.40.50.300">
    <property type="entry name" value="P-loop containing nucleotide triphosphate hydrolases"/>
    <property type="match status" value="1"/>
</dbReference>
<dbReference type="Gene3D" id="1.25.40.10">
    <property type="entry name" value="Tetratricopeptide repeat domain"/>
    <property type="match status" value="1"/>
</dbReference>
<dbReference type="Gene3D" id="1.10.10.10">
    <property type="entry name" value="Winged helix-like DNA-binding domain superfamily/Winged helix DNA-binding domain"/>
    <property type="match status" value="1"/>
</dbReference>
<dbReference type="HAMAP" id="MF_01247">
    <property type="entry name" value="HTH_type_MalT"/>
    <property type="match status" value="1"/>
</dbReference>
<dbReference type="InterPro" id="IPR027417">
    <property type="entry name" value="P-loop_NTPase"/>
</dbReference>
<dbReference type="InterPro" id="IPR016032">
    <property type="entry name" value="Sig_transdc_resp-reg_C-effctor"/>
</dbReference>
<dbReference type="InterPro" id="IPR011990">
    <property type="entry name" value="TPR-like_helical_dom_sf"/>
</dbReference>
<dbReference type="InterPro" id="IPR041617">
    <property type="entry name" value="TPR_MalT"/>
</dbReference>
<dbReference type="InterPro" id="IPR023768">
    <property type="entry name" value="Tscrpt_reg_HTH_MalT"/>
</dbReference>
<dbReference type="InterPro" id="IPR000792">
    <property type="entry name" value="Tscrpt_reg_LuxR_C"/>
</dbReference>
<dbReference type="InterPro" id="IPR036388">
    <property type="entry name" value="WH-like_DNA-bd_sf"/>
</dbReference>
<dbReference type="NCBIfam" id="NF003420">
    <property type="entry name" value="PRK04841.1"/>
    <property type="match status" value="1"/>
</dbReference>
<dbReference type="PANTHER" id="PTHR44688">
    <property type="entry name" value="DNA-BINDING TRANSCRIPTIONAL ACTIVATOR DEVR_DOSR"/>
    <property type="match status" value="1"/>
</dbReference>
<dbReference type="PANTHER" id="PTHR44688:SF16">
    <property type="entry name" value="DNA-BINDING TRANSCRIPTIONAL ACTIVATOR DEVR_DOSR"/>
    <property type="match status" value="1"/>
</dbReference>
<dbReference type="Pfam" id="PF00196">
    <property type="entry name" value="GerE"/>
    <property type="match status" value="1"/>
</dbReference>
<dbReference type="Pfam" id="PF17874">
    <property type="entry name" value="TPR_MalT"/>
    <property type="match status" value="1"/>
</dbReference>
<dbReference type="PRINTS" id="PR00038">
    <property type="entry name" value="HTHLUXR"/>
</dbReference>
<dbReference type="SMART" id="SM00421">
    <property type="entry name" value="HTH_LUXR"/>
    <property type="match status" value="1"/>
</dbReference>
<dbReference type="SUPFAM" id="SSF46894">
    <property type="entry name" value="C-terminal effector domain of the bipartite response regulators"/>
    <property type="match status" value="1"/>
</dbReference>
<dbReference type="SUPFAM" id="SSF52540">
    <property type="entry name" value="P-loop containing nucleoside triphosphate hydrolases"/>
    <property type="match status" value="1"/>
</dbReference>
<dbReference type="SUPFAM" id="SSF48452">
    <property type="entry name" value="TPR-like"/>
    <property type="match status" value="1"/>
</dbReference>
<dbReference type="PROSITE" id="PS00622">
    <property type="entry name" value="HTH_LUXR_1"/>
    <property type="match status" value="1"/>
</dbReference>
<dbReference type="PROSITE" id="PS50043">
    <property type="entry name" value="HTH_LUXR_2"/>
    <property type="match status" value="1"/>
</dbReference>
<proteinExistence type="inferred from homology"/>
<keyword id="KW-0010">Activator</keyword>
<keyword id="KW-0067">ATP-binding</keyword>
<keyword id="KW-0119">Carbohydrate metabolism</keyword>
<keyword id="KW-0238">DNA-binding</keyword>
<keyword id="KW-0547">Nucleotide-binding</keyword>
<keyword id="KW-1185">Reference proteome</keyword>
<keyword id="KW-0804">Transcription</keyword>
<keyword id="KW-0805">Transcription regulation</keyword>
<accession>B7L4U8</accession>